<name>ACP_ACTP7</name>
<evidence type="ECO:0000255" key="1">
    <source>
        <dbReference type="HAMAP-Rule" id="MF_01217"/>
    </source>
</evidence>
<evidence type="ECO:0000255" key="2">
    <source>
        <dbReference type="PROSITE-ProRule" id="PRU00258"/>
    </source>
</evidence>
<organism>
    <name type="scientific">Actinobacillus pleuropneumoniae serotype 7 (strain AP76)</name>
    <dbReference type="NCBI Taxonomy" id="537457"/>
    <lineage>
        <taxon>Bacteria</taxon>
        <taxon>Pseudomonadati</taxon>
        <taxon>Pseudomonadota</taxon>
        <taxon>Gammaproteobacteria</taxon>
        <taxon>Pasteurellales</taxon>
        <taxon>Pasteurellaceae</taxon>
        <taxon>Actinobacillus</taxon>
    </lineage>
</organism>
<reference key="1">
    <citation type="submission" date="2008-06" db="EMBL/GenBank/DDBJ databases">
        <title>Genome and proteome analysis of A. pleuropneumoniae serotype 7.</title>
        <authorList>
            <person name="Linke B."/>
            <person name="Buettner F."/>
            <person name="Martinez-Arias R."/>
            <person name="Goesmann A."/>
            <person name="Baltes N."/>
            <person name="Tegetmeyer H."/>
            <person name="Singh M."/>
            <person name="Gerlach G.F."/>
        </authorList>
    </citation>
    <scope>NUCLEOTIDE SEQUENCE [LARGE SCALE GENOMIC DNA]</scope>
    <source>
        <strain>AP76</strain>
    </source>
</reference>
<proteinExistence type="inferred from homology"/>
<keyword id="KW-0963">Cytoplasm</keyword>
<keyword id="KW-0275">Fatty acid biosynthesis</keyword>
<keyword id="KW-0276">Fatty acid metabolism</keyword>
<keyword id="KW-0444">Lipid biosynthesis</keyword>
<keyword id="KW-0443">Lipid metabolism</keyword>
<keyword id="KW-0596">Phosphopantetheine</keyword>
<keyword id="KW-0597">Phosphoprotein</keyword>
<accession>B3GZ71</accession>
<sequence>MSIEERVKKIIVDQLGVKAEDVKPEASFIEDLGADSLDTVELVMALEEEFDIEIPDEEAEKITTVQSAIDYVTKANA</sequence>
<gene>
    <name evidence="1" type="primary">acpP</name>
    <name type="ordered locus">APP7_1905</name>
</gene>
<comment type="function">
    <text evidence="1">Carrier of the growing fatty acid chain in fatty acid biosynthesis.</text>
</comment>
<comment type="pathway">
    <text evidence="1">Lipid metabolism; fatty acid biosynthesis.</text>
</comment>
<comment type="subcellular location">
    <subcellularLocation>
        <location evidence="1">Cytoplasm</location>
    </subcellularLocation>
</comment>
<comment type="PTM">
    <text evidence="1">4'-phosphopantetheine is transferred from CoA to a specific serine of apo-ACP by AcpS. This modification is essential for activity because fatty acids are bound in thioester linkage to the sulfhydryl of the prosthetic group.</text>
</comment>
<comment type="similarity">
    <text evidence="1">Belongs to the acyl carrier protein (ACP) family.</text>
</comment>
<feature type="chain" id="PRO_1000138994" description="Acyl carrier protein">
    <location>
        <begin position="1"/>
        <end position="77"/>
    </location>
</feature>
<feature type="domain" description="Carrier" evidence="2">
    <location>
        <begin position="1"/>
        <end position="76"/>
    </location>
</feature>
<feature type="modified residue" description="O-(pantetheine 4'-phosphoryl)serine" evidence="2">
    <location>
        <position position="36"/>
    </location>
</feature>
<protein>
    <recommendedName>
        <fullName evidence="1">Acyl carrier protein</fullName>
        <shortName evidence="1">ACP</shortName>
    </recommendedName>
</protein>
<dbReference type="EMBL" id="CP001091">
    <property type="protein sequence ID" value="ACE62557.1"/>
    <property type="molecule type" value="Genomic_DNA"/>
</dbReference>
<dbReference type="RefSeq" id="WP_005599419.1">
    <property type="nucleotide sequence ID" value="NC_010939.1"/>
</dbReference>
<dbReference type="SMR" id="B3GZ71"/>
<dbReference type="GeneID" id="92743596"/>
<dbReference type="KEGG" id="apa:APP7_1905"/>
<dbReference type="HOGENOM" id="CLU_108696_5_1_6"/>
<dbReference type="UniPathway" id="UPA00094"/>
<dbReference type="Proteomes" id="UP000001226">
    <property type="component" value="Chromosome"/>
</dbReference>
<dbReference type="GO" id="GO:0005829">
    <property type="term" value="C:cytosol"/>
    <property type="evidence" value="ECO:0007669"/>
    <property type="project" value="TreeGrafter"/>
</dbReference>
<dbReference type="GO" id="GO:0016020">
    <property type="term" value="C:membrane"/>
    <property type="evidence" value="ECO:0007669"/>
    <property type="project" value="GOC"/>
</dbReference>
<dbReference type="GO" id="GO:0000035">
    <property type="term" value="F:acyl binding"/>
    <property type="evidence" value="ECO:0007669"/>
    <property type="project" value="TreeGrafter"/>
</dbReference>
<dbReference type="GO" id="GO:0000036">
    <property type="term" value="F:acyl carrier activity"/>
    <property type="evidence" value="ECO:0007669"/>
    <property type="project" value="UniProtKB-UniRule"/>
</dbReference>
<dbReference type="GO" id="GO:0031177">
    <property type="term" value="F:phosphopantetheine binding"/>
    <property type="evidence" value="ECO:0007669"/>
    <property type="project" value="InterPro"/>
</dbReference>
<dbReference type="GO" id="GO:0009245">
    <property type="term" value="P:lipid A biosynthetic process"/>
    <property type="evidence" value="ECO:0007669"/>
    <property type="project" value="TreeGrafter"/>
</dbReference>
<dbReference type="FunFam" id="1.10.1200.10:FF:000001">
    <property type="entry name" value="Acyl carrier protein"/>
    <property type="match status" value="1"/>
</dbReference>
<dbReference type="Gene3D" id="1.10.1200.10">
    <property type="entry name" value="ACP-like"/>
    <property type="match status" value="1"/>
</dbReference>
<dbReference type="HAMAP" id="MF_01217">
    <property type="entry name" value="Acyl_carrier"/>
    <property type="match status" value="1"/>
</dbReference>
<dbReference type="InterPro" id="IPR003231">
    <property type="entry name" value="ACP"/>
</dbReference>
<dbReference type="InterPro" id="IPR036736">
    <property type="entry name" value="ACP-like_sf"/>
</dbReference>
<dbReference type="InterPro" id="IPR020806">
    <property type="entry name" value="PKS_PP-bd"/>
</dbReference>
<dbReference type="InterPro" id="IPR009081">
    <property type="entry name" value="PP-bd_ACP"/>
</dbReference>
<dbReference type="InterPro" id="IPR006162">
    <property type="entry name" value="Ppantetheine_attach_site"/>
</dbReference>
<dbReference type="NCBIfam" id="TIGR00517">
    <property type="entry name" value="acyl_carrier"/>
    <property type="match status" value="1"/>
</dbReference>
<dbReference type="NCBIfam" id="NF002148">
    <property type="entry name" value="PRK00982.1-2"/>
    <property type="match status" value="1"/>
</dbReference>
<dbReference type="NCBIfam" id="NF002149">
    <property type="entry name" value="PRK00982.1-3"/>
    <property type="match status" value="1"/>
</dbReference>
<dbReference type="NCBIfam" id="NF002150">
    <property type="entry name" value="PRK00982.1-4"/>
    <property type="match status" value="1"/>
</dbReference>
<dbReference type="NCBIfam" id="NF002151">
    <property type="entry name" value="PRK00982.1-5"/>
    <property type="match status" value="1"/>
</dbReference>
<dbReference type="PANTHER" id="PTHR20863">
    <property type="entry name" value="ACYL CARRIER PROTEIN"/>
    <property type="match status" value="1"/>
</dbReference>
<dbReference type="PANTHER" id="PTHR20863:SF76">
    <property type="entry name" value="CARRIER DOMAIN-CONTAINING PROTEIN"/>
    <property type="match status" value="1"/>
</dbReference>
<dbReference type="Pfam" id="PF00550">
    <property type="entry name" value="PP-binding"/>
    <property type="match status" value="1"/>
</dbReference>
<dbReference type="SMART" id="SM00823">
    <property type="entry name" value="PKS_PP"/>
    <property type="match status" value="1"/>
</dbReference>
<dbReference type="SUPFAM" id="SSF47336">
    <property type="entry name" value="ACP-like"/>
    <property type="match status" value="1"/>
</dbReference>
<dbReference type="PROSITE" id="PS50075">
    <property type="entry name" value="CARRIER"/>
    <property type="match status" value="1"/>
</dbReference>
<dbReference type="PROSITE" id="PS00012">
    <property type="entry name" value="PHOSPHOPANTETHEINE"/>
    <property type="match status" value="1"/>
</dbReference>